<dbReference type="EC" id="6.3.5.7" evidence="1"/>
<dbReference type="EMBL" id="CP000703">
    <property type="protein sequence ID" value="ABQ49740.1"/>
    <property type="molecule type" value="Genomic_DNA"/>
</dbReference>
<dbReference type="RefSeq" id="WP_000027917.1">
    <property type="nucleotide sequence ID" value="NC_009487.1"/>
</dbReference>
<dbReference type="SMR" id="A5IU67"/>
<dbReference type="KEGG" id="saj:SaurJH9_1955"/>
<dbReference type="HOGENOM" id="CLU_009600_0_3_9"/>
<dbReference type="GO" id="GO:0030956">
    <property type="term" value="C:glutamyl-tRNA(Gln) amidotransferase complex"/>
    <property type="evidence" value="ECO:0007669"/>
    <property type="project" value="InterPro"/>
</dbReference>
<dbReference type="GO" id="GO:0005524">
    <property type="term" value="F:ATP binding"/>
    <property type="evidence" value="ECO:0007669"/>
    <property type="project" value="UniProtKB-KW"/>
</dbReference>
<dbReference type="GO" id="GO:0050567">
    <property type="term" value="F:glutaminyl-tRNA synthase (glutamine-hydrolyzing) activity"/>
    <property type="evidence" value="ECO:0007669"/>
    <property type="project" value="UniProtKB-UniRule"/>
</dbReference>
<dbReference type="GO" id="GO:0006412">
    <property type="term" value="P:translation"/>
    <property type="evidence" value="ECO:0007669"/>
    <property type="project" value="UniProtKB-UniRule"/>
</dbReference>
<dbReference type="Gene3D" id="3.90.1300.10">
    <property type="entry name" value="Amidase signature (AS) domain"/>
    <property type="match status" value="1"/>
</dbReference>
<dbReference type="HAMAP" id="MF_00120">
    <property type="entry name" value="GatA"/>
    <property type="match status" value="1"/>
</dbReference>
<dbReference type="InterPro" id="IPR000120">
    <property type="entry name" value="Amidase"/>
</dbReference>
<dbReference type="InterPro" id="IPR020556">
    <property type="entry name" value="Amidase_CS"/>
</dbReference>
<dbReference type="InterPro" id="IPR023631">
    <property type="entry name" value="Amidase_dom"/>
</dbReference>
<dbReference type="InterPro" id="IPR036928">
    <property type="entry name" value="AS_sf"/>
</dbReference>
<dbReference type="InterPro" id="IPR004412">
    <property type="entry name" value="GatA"/>
</dbReference>
<dbReference type="NCBIfam" id="TIGR00132">
    <property type="entry name" value="gatA"/>
    <property type="match status" value="1"/>
</dbReference>
<dbReference type="PANTHER" id="PTHR11895:SF151">
    <property type="entry name" value="GLUTAMYL-TRNA(GLN) AMIDOTRANSFERASE SUBUNIT A"/>
    <property type="match status" value="1"/>
</dbReference>
<dbReference type="PANTHER" id="PTHR11895">
    <property type="entry name" value="TRANSAMIDASE"/>
    <property type="match status" value="1"/>
</dbReference>
<dbReference type="Pfam" id="PF01425">
    <property type="entry name" value="Amidase"/>
    <property type="match status" value="1"/>
</dbReference>
<dbReference type="SUPFAM" id="SSF75304">
    <property type="entry name" value="Amidase signature (AS) enzymes"/>
    <property type="match status" value="1"/>
</dbReference>
<dbReference type="PROSITE" id="PS00571">
    <property type="entry name" value="AMIDASES"/>
    <property type="match status" value="1"/>
</dbReference>
<feature type="chain" id="PRO_1000076144" description="Glutamyl-tRNA(Gln) amidotransferase subunit A">
    <location>
        <begin position="1"/>
        <end position="485"/>
    </location>
</feature>
<feature type="active site" description="Charge relay system" evidence="1">
    <location>
        <position position="79"/>
    </location>
</feature>
<feature type="active site" description="Charge relay system" evidence="1">
    <location>
        <position position="154"/>
    </location>
</feature>
<feature type="active site" description="Acyl-ester intermediate" evidence="1">
    <location>
        <position position="178"/>
    </location>
</feature>
<name>GATA_STAA9</name>
<evidence type="ECO:0000255" key="1">
    <source>
        <dbReference type="HAMAP-Rule" id="MF_00120"/>
    </source>
</evidence>
<sequence>MSIRYESVENLLTLIKDKKIKPSDVVKDIYDAIEETDPTIKSFLALDKENAIKKAQELDELQAKDQMDGKLFGIPMGIKDNIITNGLETTCASKMLEGFVPIYESTVMEKLHKENAVLIGKLNMDEFAMGGSTETSYFKKTVNPFDHKAVPGGSSGGSAAAVAAGLVPFSLGSDTGGSIRQPAAYCGVVGMKPTYGRVSRFGLVAFASSLDQIGPLTRNVKDNAIVLEAISGADVNDSTSAPVDDVDFTSEIGKDIKGLKVALPKEYLGEGVADDVKEAVQNAVETLKSLGAVVEEVSLPNTKFGIPSYYVIASSEASSNLSRFDGIRYGYHSKEAHSLEELYKMSRSEGFGKEVKRRIFLGTFALSSGYYDAYYKKSQKVRTLIKNDFDKVFENYDVVVGPTAPTTAFNLGEEIDDPLTMYANDLLTTPVNLAGLPGISVPCGQSNGRPIGLQFIGKPFDEKTLYRVAYQYETQYNLHDVYEKL</sequence>
<comment type="function">
    <text evidence="1">Allows the formation of correctly charged Gln-tRNA(Gln) through the transamidation of misacylated Glu-tRNA(Gln) in organisms which lack glutaminyl-tRNA synthetase. The reaction takes place in the presence of glutamine and ATP through an activated gamma-phospho-Glu-tRNA(Gln).</text>
</comment>
<comment type="catalytic activity">
    <reaction evidence="1">
        <text>L-glutamyl-tRNA(Gln) + L-glutamine + ATP + H2O = L-glutaminyl-tRNA(Gln) + L-glutamate + ADP + phosphate + H(+)</text>
        <dbReference type="Rhea" id="RHEA:17521"/>
        <dbReference type="Rhea" id="RHEA-COMP:9681"/>
        <dbReference type="Rhea" id="RHEA-COMP:9684"/>
        <dbReference type="ChEBI" id="CHEBI:15377"/>
        <dbReference type="ChEBI" id="CHEBI:15378"/>
        <dbReference type="ChEBI" id="CHEBI:29985"/>
        <dbReference type="ChEBI" id="CHEBI:30616"/>
        <dbReference type="ChEBI" id="CHEBI:43474"/>
        <dbReference type="ChEBI" id="CHEBI:58359"/>
        <dbReference type="ChEBI" id="CHEBI:78520"/>
        <dbReference type="ChEBI" id="CHEBI:78521"/>
        <dbReference type="ChEBI" id="CHEBI:456216"/>
        <dbReference type="EC" id="6.3.5.7"/>
    </reaction>
</comment>
<comment type="subunit">
    <text evidence="1">Heterotrimer of A, B and C subunits.</text>
</comment>
<comment type="similarity">
    <text evidence="1">Belongs to the amidase family. GatA subfamily.</text>
</comment>
<organism>
    <name type="scientific">Staphylococcus aureus (strain JH9)</name>
    <dbReference type="NCBI Taxonomy" id="359786"/>
    <lineage>
        <taxon>Bacteria</taxon>
        <taxon>Bacillati</taxon>
        <taxon>Bacillota</taxon>
        <taxon>Bacilli</taxon>
        <taxon>Bacillales</taxon>
        <taxon>Staphylococcaceae</taxon>
        <taxon>Staphylococcus</taxon>
    </lineage>
</organism>
<accession>A5IU67</accession>
<reference key="1">
    <citation type="submission" date="2007-05" db="EMBL/GenBank/DDBJ databases">
        <title>Complete sequence of chromosome of Staphylococcus aureus subsp. aureus JH9.</title>
        <authorList>
            <consortium name="US DOE Joint Genome Institute"/>
            <person name="Copeland A."/>
            <person name="Lucas S."/>
            <person name="Lapidus A."/>
            <person name="Barry K."/>
            <person name="Detter J.C."/>
            <person name="Glavina del Rio T."/>
            <person name="Hammon N."/>
            <person name="Israni S."/>
            <person name="Pitluck S."/>
            <person name="Chain P."/>
            <person name="Malfatti S."/>
            <person name="Shin M."/>
            <person name="Vergez L."/>
            <person name="Schmutz J."/>
            <person name="Larimer F."/>
            <person name="Land M."/>
            <person name="Hauser L."/>
            <person name="Kyrpides N."/>
            <person name="Kim E."/>
            <person name="Tomasz A."/>
            <person name="Richardson P."/>
        </authorList>
    </citation>
    <scope>NUCLEOTIDE SEQUENCE [LARGE SCALE GENOMIC DNA]</scope>
    <source>
        <strain>JH9</strain>
    </source>
</reference>
<gene>
    <name evidence="1" type="primary">gatA</name>
    <name type="ordered locus">SaurJH9_1955</name>
</gene>
<proteinExistence type="inferred from homology"/>
<keyword id="KW-0067">ATP-binding</keyword>
<keyword id="KW-0436">Ligase</keyword>
<keyword id="KW-0547">Nucleotide-binding</keyword>
<keyword id="KW-0648">Protein biosynthesis</keyword>
<protein>
    <recommendedName>
        <fullName evidence="1">Glutamyl-tRNA(Gln) amidotransferase subunit A</fullName>
        <shortName evidence="1">Glu-ADT subunit A</shortName>
        <ecNumber evidence="1">6.3.5.7</ecNumber>
    </recommendedName>
</protein>